<keyword id="KW-0010">Activator</keyword>
<keyword id="KW-0235">DNA replication</keyword>
<keyword id="KW-0238">DNA-binding</keyword>
<keyword id="KW-0244">Early protein</keyword>
<keyword id="KW-1048">Host nucleus</keyword>
<keyword id="KW-1017">Isopeptide bond</keyword>
<keyword id="KW-0597">Phosphoprotein</keyword>
<keyword id="KW-0678">Repressor</keyword>
<keyword id="KW-0804">Transcription</keyword>
<keyword id="KW-0805">Transcription regulation</keyword>
<keyword id="KW-0832">Ubl conjugation</keyword>
<proteinExistence type="inferred from homology"/>
<organism>
    <name type="scientific">Human papillomavirus 65</name>
    <dbReference type="NCBI Taxonomy" id="28312"/>
    <lineage>
        <taxon>Viruses</taxon>
        <taxon>Monodnaviria</taxon>
        <taxon>Shotokuvirae</taxon>
        <taxon>Cossaviricota</taxon>
        <taxon>Papovaviricetes</taxon>
        <taxon>Zurhausenvirales</taxon>
        <taxon>Papillomaviridae</taxon>
        <taxon>Firstpapillomavirinae</taxon>
        <taxon>Gammapapillomavirus</taxon>
        <taxon>Gammapapillomavirus 1</taxon>
    </lineage>
</organism>
<gene>
    <name evidence="1" type="primary">E2</name>
</gene>
<dbReference type="EMBL" id="X70829">
    <property type="protein sequence ID" value="CAA50174.1"/>
    <property type="molecule type" value="Genomic_DNA"/>
</dbReference>
<dbReference type="SMR" id="Q07851"/>
<dbReference type="Proteomes" id="UP000007672">
    <property type="component" value="Genome"/>
</dbReference>
<dbReference type="GO" id="GO:0042025">
    <property type="term" value="C:host cell nucleus"/>
    <property type="evidence" value="ECO:0007669"/>
    <property type="project" value="UniProtKB-SubCell"/>
</dbReference>
<dbReference type="GO" id="GO:0003677">
    <property type="term" value="F:DNA binding"/>
    <property type="evidence" value="ECO:0007669"/>
    <property type="project" value="UniProtKB-UniRule"/>
</dbReference>
<dbReference type="GO" id="GO:0003700">
    <property type="term" value="F:DNA-binding transcription factor activity"/>
    <property type="evidence" value="ECO:0007669"/>
    <property type="project" value="UniProtKB-UniRule"/>
</dbReference>
<dbReference type="GO" id="GO:0000166">
    <property type="term" value="F:nucleotide binding"/>
    <property type="evidence" value="ECO:0007669"/>
    <property type="project" value="UniProtKB-UniRule"/>
</dbReference>
<dbReference type="GO" id="GO:0006260">
    <property type="term" value="P:DNA replication"/>
    <property type="evidence" value="ECO:0007669"/>
    <property type="project" value="UniProtKB-KW"/>
</dbReference>
<dbReference type="GO" id="GO:0006351">
    <property type="term" value="P:DNA-templated transcription"/>
    <property type="evidence" value="ECO:0007669"/>
    <property type="project" value="UniProtKB-UniRule"/>
</dbReference>
<dbReference type="GO" id="GO:0006275">
    <property type="term" value="P:regulation of DNA replication"/>
    <property type="evidence" value="ECO:0007669"/>
    <property type="project" value="UniProtKB-UniRule"/>
</dbReference>
<dbReference type="GO" id="GO:0039693">
    <property type="term" value="P:viral DNA genome replication"/>
    <property type="evidence" value="ECO:0007669"/>
    <property type="project" value="UniProtKB-UniRule"/>
</dbReference>
<dbReference type="Gene3D" id="3.30.70.330">
    <property type="match status" value="1"/>
</dbReference>
<dbReference type="Gene3D" id="1.10.287.30">
    <property type="entry name" value="E2 (early) protein, N terminal domain, subdomain 1"/>
    <property type="match status" value="1"/>
</dbReference>
<dbReference type="Gene3D" id="2.170.200.10">
    <property type="entry name" value="Papillomavirus E2 early protein domain"/>
    <property type="match status" value="1"/>
</dbReference>
<dbReference type="HAMAP" id="MF_04001">
    <property type="entry name" value="PPV_E2"/>
    <property type="match status" value="1"/>
</dbReference>
<dbReference type="InterPro" id="IPR035975">
    <property type="entry name" value="E2/EBNA1_C_sf"/>
</dbReference>
<dbReference type="InterPro" id="IPR012677">
    <property type="entry name" value="Nucleotide-bd_a/b_plait_sf"/>
</dbReference>
<dbReference type="InterPro" id="IPR000427">
    <property type="entry name" value="Papillomavirus_E2_C"/>
</dbReference>
<dbReference type="InterPro" id="IPR001866">
    <property type="entry name" value="PPV_E2_N"/>
</dbReference>
<dbReference type="InterPro" id="IPR033668">
    <property type="entry name" value="Reg_prot_E2"/>
</dbReference>
<dbReference type="InterPro" id="IPR036050">
    <property type="entry name" value="Regulatory_protein_E2_N"/>
</dbReference>
<dbReference type="InterPro" id="IPR042503">
    <property type="entry name" value="Regulatory_protein_E2_N_1"/>
</dbReference>
<dbReference type="InterPro" id="IPR042504">
    <property type="entry name" value="Regulatory_protein_E2_N_2"/>
</dbReference>
<dbReference type="Pfam" id="PF00511">
    <property type="entry name" value="PPV_E2_C"/>
    <property type="match status" value="1"/>
</dbReference>
<dbReference type="Pfam" id="PF00508">
    <property type="entry name" value="PPV_E2_N"/>
    <property type="match status" value="1"/>
</dbReference>
<dbReference type="SUPFAM" id="SSF51332">
    <property type="entry name" value="E2 regulatory, transactivation domain"/>
    <property type="match status" value="1"/>
</dbReference>
<dbReference type="SUPFAM" id="SSF54957">
    <property type="entry name" value="Viral DNA-binding domain"/>
    <property type="match status" value="1"/>
</dbReference>
<reference key="1">
    <citation type="journal article" date="1993" name="Virology">
        <title>Two novel types of human papillomavirus, HPV 63 and HPV 65: comparisons of their clinical and histological features and DNA sequences to other HPV types.</title>
        <authorList>
            <person name="Egawa K."/>
            <person name="Delius H."/>
            <person name="Matsukura T."/>
            <person name="Kawashima M."/>
            <person name="de Villiers E.M."/>
        </authorList>
    </citation>
    <scope>NUCLEOTIDE SEQUENCE [GENOMIC DNA]</scope>
</reference>
<feature type="chain" id="PRO_0000133240" description="Regulatory protein E2">
    <location>
        <begin position="1"/>
        <end position="402"/>
    </location>
</feature>
<feature type="region of interest" description="Transactivation domain" evidence="1">
    <location>
        <begin position="1"/>
        <end position="202"/>
    </location>
</feature>
<feature type="region of interest" description="Disordered" evidence="2">
    <location>
        <begin position="201"/>
        <end position="303"/>
    </location>
</feature>
<feature type="region of interest" description="DNA-binding domain" evidence="1">
    <location>
        <begin position="321"/>
        <end position="402"/>
    </location>
</feature>
<feature type="compositionally biased region" description="Polar residues" evidence="2">
    <location>
        <begin position="216"/>
        <end position="230"/>
    </location>
</feature>
<feature type="compositionally biased region" description="Low complexity" evidence="2">
    <location>
        <begin position="240"/>
        <end position="253"/>
    </location>
</feature>
<feature type="compositionally biased region" description="Basic residues" evidence="2">
    <location>
        <begin position="254"/>
        <end position="263"/>
    </location>
</feature>
<feature type="cross-link" description="Glycyl lysine isopeptide (Lys-Gly) (interchain with G-Cter in SUMO)" evidence="1">
    <location>
        <position position="328"/>
    </location>
</feature>
<sequence>MESLVARFDALQEAILTHIESQDDTLESQIRYWENIRKENAIMHFARKQGLTKLGLQPLPTLAVTEYNAKQAIQIHLTLQSLLKSPYGSERWTLPEVSAELINTAPQNCLKKGGYDVSVWFDNDRYNAMVYTNWDYLYYQDVNEIWHKVKGEVDYDGLYFTDHTGERAYFTLFSTDAHRFSRTGLWTVHFKTQVISSSVVSSTNTPSFDFEEQQLPGPSTPTYTELTQASPCGRGKSRESQPTSTTSPETSGLRVRRGRRQRKSGPGPGETPSKRRRGGGRGGGETRLESAPSPGEVGIRHRTVERQGLSRLGQLQAEARDPPMILLKGTANSLKCWRYRKQNSSNCGFLFMSTVWNWVGDVSENHSRMLIAFKSPGQRDSFVKHNLFPKLCTYTYGSLNSL</sequence>
<protein>
    <recommendedName>
        <fullName evidence="1">Regulatory protein E2</fullName>
    </recommendedName>
</protein>
<evidence type="ECO:0000255" key="1">
    <source>
        <dbReference type="HAMAP-Rule" id="MF_04001"/>
    </source>
</evidence>
<evidence type="ECO:0000256" key="2">
    <source>
        <dbReference type="SAM" id="MobiDB-lite"/>
    </source>
</evidence>
<name>VE2_HPV65</name>
<comment type="function">
    <text evidence="1">Plays a role in the initiation of viral DNA replication. A dimer of E2 interacts with a dimer of E1 in order to improve specificity of E1 DNA binding activity. Once the complex recognizes and binds DNA at specific sites, the E2 dimer is removed from DNA. E2 also regulates viral transcription through binding to the E2RE response element (5'-ACCNNNNNNGGT-3') present in multiple copies in the regulatory regions of the viral genome. Activates or represses transcription depending on E2RE's position with regards to proximal promoter elements including the TATA-box. Repression occurs by sterically hindering the assembly of the transcription initiation complex.</text>
</comment>
<comment type="subunit">
    <text evidence="1">Binds DNA as homodimer. Interacts with protein E1; this interaction greatly increases E1 DNA-binding activity. Interacts with protein L1; this interaction enhances E2-dependent replication and transcription activation. Interacts with protein L2; this interaction inhibits E2 transcriptional activity but not DNA replication function E2. Interacts with protein E7; this interaction inhibits E7 oncogenic activity. Interacts with host TAF1; this interaction modulates E2-dependent transcriptional regulation. Interacts with host BRD4; this interaction mediates E2 transcriptional activation function. Additionally, the interaction with host BRD4 on mitotic chromosomes mediates tethering of the viral genome. Interacts with host TOPBP1; this interaction is required for optimal viral DNA replication.</text>
</comment>
<comment type="subcellular location">
    <subcellularLocation>
        <location evidence="1">Host nucleus</location>
    </subcellularLocation>
</comment>
<comment type="PTM">
    <text evidence="1">Phosphorylated.</text>
</comment>
<comment type="PTM">
    <text evidence="1">Sumoylation plays a regulatory role in E2 transcriptional activity.</text>
</comment>
<comment type="similarity">
    <text evidence="1">Belongs to the papillomaviridae E2 protein family.</text>
</comment>
<accession>Q07851</accession>
<organismHost>
    <name type="scientific">Homo sapiens</name>
    <name type="common">Human</name>
    <dbReference type="NCBI Taxonomy" id="9606"/>
</organismHost>